<protein>
    <recommendedName>
        <fullName>3-hydroxyisobutyrate dehydrogenase</fullName>
        <shortName>HIBADH</shortName>
        <ecNumber>1.1.1.31</ecNumber>
    </recommendedName>
</protein>
<accession>P32185</accession>
<gene>
    <name type="primary">HIBADH</name>
</gene>
<comment type="catalytic activity">
    <reaction>
        <text>3-hydroxy-2-methylpropanoate + NAD(+) = 2-methyl-3-oxopropanoate + NADH + H(+)</text>
        <dbReference type="Rhea" id="RHEA:17681"/>
        <dbReference type="ChEBI" id="CHEBI:11805"/>
        <dbReference type="ChEBI" id="CHEBI:15378"/>
        <dbReference type="ChEBI" id="CHEBI:57540"/>
        <dbReference type="ChEBI" id="CHEBI:57700"/>
        <dbReference type="ChEBI" id="CHEBI:57945"/>
        <dbReference type="EC" id="1.1.1.31"/>
    </reaction>
</comment>
<comment type="pathway">
    <text>Amino-acid degradation; L-valine degradation.</text>
</comment>
<comment type="subunit">
    <text>Homodimer.</text>
</comment>
<comment type="subcellular location">
    <subcellularLocation>
        <location>Mitochondrion</location>
    </subcellularLocation>
</comment>
<comment type="similarity">
    <text evidence="3">Belongs to the HIBADH-related family. 3-hydroxyisobutyrate dehydrogenase subfamily.</text>
</comment>
<feature type="chain" id="PRO_0000173054" description="3-hydroxyisobutyrate dehydrogenase">
    <location>
        <begin position="1"/>
        <end position="35" status="greater than"/>
    </location>
</feature>
<feature type="binding site" evidence="1">
    <location>
        <begin position="4"/>
        <end position="33"/>
    </location>
    <ligand>
        <name>NAD(+)</name>
        <dbReference type="ChEBI" id="CHEBI:57540"/>
    </ligand>
</feature>
<feature type="modified residue" description="N6-acetyllysine; alternate" evidence="2">
    <location>
        <position position="24"/>
    </location>
</feature>
<feature type="modified residue" description="N6-succinyllysine; alternate" evidence="2">
    <location>
        <position position="24"/>
    </location>
</feature>
<feature type="non-terminal residue">
    <location>
        <position position="35"/>
    </location>
</feature>
<sequence>ASKTPVGFIGLGNMGNPMAKNLMKHGYPLIIYDVF</sequence>
<proteinExistence type="evidence at protein level"/>
<dbReference type="EC" id="1.1.1.31"/>
<dbReference type="SMR" id="P32185"/>
<dbReference type="STRING" id="9986.ENSOCUP00000046575"/>
<dbReference type="PaxDb" id="9986-ENSOCUP00000008912"/>
<dbReference type="eggNOG" id="KOG0409">
    <property type="taxonomic scope" value="Eukaryota"/>
</dbReference>
<dbReference type="InParanoid" id="P32185"/>
<dbReference type="UniPathway" id="UPA00362"/>
<dbReference type="Proteomes" id="UP000001811">
    <property type="component" value="Unplaced"/>
</dbReference>
<dbReference type="GO" id="GO:0005739">
    <property type="term" value="C:mitochondrion"/>
    <property type="evidence" value="ECO:0007669"/>
    <property type="project" value="UniProtKB-SubCell"/>
</dbReference>
<dbReference type="GO" id="GO:0008442">
    <property type="term" value="F:3-hydroxyisobutyrate dehydrogenase activity"/>
    <property type="evidence" value="ECO:0000250"/>
    <property type="project" value="UniProtKB"/>
</dbReference>
<dbReference type="GO" id="GO:0050661">
    <property type="term" value="F:NADP binding"/>
    <property type="evidence" value="ECO:0007669"/>
    <property type="project" value="InterPro"/>
</dbReference>
<dbReference type="GO" id="GO:0006574">
    <property type="term" value="P:valine catabolic process"/>
    <property type="evidence" value="ECO:0000250"/>
    <property type="project" value="UniProtKB"/>
</dbReference>
<dbReference type="Gene3D" id="3.40.50.720">
    <property type="entry name" value="NAD(P)-binding Rossmann-like Domain"/>
    <property type="match status" value="1"/>
</dbReference>
<dbReference type="InterPro" id="IPR002204">
    <property type="entry name" value="3-OH-isobutyrate_DH-rel_CS"/>
</dbReference>
<dbReference type="InterPro" id="IPR006115">
    <property type="entry name" value="6PGDH_NADP-bd"/>
</dbReference>
<dbReference type="InterPro" id="IPR036291">
    <property type="entry name" value="NAD(P)-bd_dom_sf"/>
</dbReference>
<dbReference type="PANTHER" id="PTHR22981:SF7">
    <property type="entry name" value="3-HYDROXYISOBUTYRATE DEHYDROGENASE, MITOCHONDRIAL"/>
    <property type="match status" value="1"/>
</dbReference>
<dbReference type="PANTHER" id="PTHR22981">
    <property type="entry name" value="3-HYDROXYISOBUTYRATE DEHYDROGENASE-RELATED"/>
    <property type="match status" value="1"/>
</dbReference>
<dbReference type="Pfam" id="PF03446">
    <property type="entry name" value="NAD_binding_2"/>
    <property type="match status" value="1"/>
</dbReference>
<dbReference type="SUPFAM" id="SSF51735">
    <property type="entry name" value="NAD(P)-binding Rossmann-fold domains"/>
    <property type="match status" value="1"/>
</dbReference>
<dbReference type="PROSITE" id="PS00895">
    <property type="entry name" value="3_HYDROXYISOBUT_DH"/>
    <property type="match status" value="1"/>
</dbReference>
<name>3HIDH_RABIT</name>
<organism>
    <name type="scientific">Oryctolagus cuniculus</name>
    <name type="common">Rabbit</name>
    <dbReference type="NCBI Taxonomy" id="9986"/>
    <lineage>
        <taxon>Eukaryota</taxon>
        <taxon>Metazoa</taxon>
        <taxon>Chordata</taxon>
        <taxon>Craniata</taxon>
        <taxon>Vertebrata</taxon>
        <taxon>Euteleostomi</taxon>
        <taxon>Mammalia</taxon>
        <taxon>Eutheria</taxon>
        <taxon>Euarchontoglires</taxon>
        <taxon>Glires</taxon>
        <taxon>Lagomorpha</taxon>
        <taxon>Leporidae</taxon>
        <taxon>Oryctolagus</taxon>
    </lineage>
</organism>
<reference key="1">
    <citation type="journal article" date="1989" name="J. Biol. Chem.">
        <title>Cloning and sequence analysis of a cDNA for 3-hydroxyisobutyrate dehydrogenase. Evidence for its evolutionary relationship to other pyridine nucleotide-dependent dehydrogenases.</title>
        <authorList>
            <person name="Rougraff P.M."/>
            <person name="Zhang B."/>
            <person name="Kuntz M.J."/>
            <person name="Harris R.A."/>
            <person name="Crabb D.W."/>
        </authorList>
    </citation>
    <scope>PROTEIN SEQUENCE</scope>
    <source>
        <tissue>Liver</tissue>
    </source>
</reference>
<evidence type="ECO:0000250" key="1"/>
<evidence type="ECO:0000250" key="2">
    <source>
        <dbReference type="UniProtKB" id="Q99L13"/>
    </source>
</evidence>
<evidence type="ECO:0000305" key="3"/>
<keyword id="KW-0007">Acetylation</keyword>
<keyword id="KW-0101">Branched-chain amino acid catabolism</keyword>
<keyword id="KW-0903">Direct protein sequencing</keyword>
<keyword id="KW-0496">Mitochondrion</keyword>
<keyword id="KW-0520">NAD</keyword>
<keyword id="KW-0560">Oxidoreductase</keyword>
<keyword id="KW-1185">Reference proteome</keyword>